<comment type="function">
    <text evidence="2">Involved in the biosynthesis of the coenzyme F420 which requires phospholactate produced via the aldol cleavage of L-fuculose 1-phosphate and the NAD(+)-dependent oxidation of (S)-lactaldehyde. Catalyzes the reversible cleavage of L-fuculose 1-phosphate (Fuc1P) to yield dihydroxyacetone phosphate (DHAP) and S-lactaldehyde.</text>
</comment>
<comment type="catalytic activity">
    <reaction evidence="2">
        <text>L-fuculose 1-phosphate = (S)-lactaldehyde + dihydroxyacetone phosphate</text>
        <dbReference type="Rhea" id="RHEA:12933"/>
        <dbReference type="ChEBI" id="CHEBI:18041"/>
        <dbReference type="ChEBI" id="CHEBI:57642"/>
        <dbReference type="ChEBI" id="CHEBI:57846"/>
        <dbReference type="EC" id="4.1.2.17"/>
    </reaction>
</comment>
<comment type="cofactor">
    <cofactor evidence="2">
        <name>Zn(2+)</name>
        <dbReference type="ChEBI" id="CHEBI:29105"/>
    </cofactor>
    <text evidence="1">Binds 1 zinc ion per subunit.</text>
</comment>
<comment type="pathway">
    <text evidence="2">Cofactor biosynthesis; coenzyme F420 biosynthesis.</text>
</comment>
<comment type="subunit">
    <text evidence="2">Homotetramer.</text>
</comment>
<comment type="similarity">
    <text evidence="2">Belongs to the aldolase class II family. AraD/FucA subfamily.</text>
</comment>
<proteinExistence type="inferred from homology"/>
<gene>
    <name type="primary">fucA</name>
    <name type="ordered locus">Mevan_0503</name>
</gene>
<accession>A6UPI8</accession>
<sequence length="181" mass="20301">MDLKEFIKICHLLYDRKYVVGSGGNVSLKKDNLVYITPTGSILGFLNEEDICVVDIAGKIIKGKPTSELNMHLEIYRNKPHVNAVVHTHSMYCTAFSVLDKKLELYTPEAEIFLKKIGYVDYCPCGTLELAECVSSCNEDVLILKKHGIVTLGSTLTEAYIKTEVLEEIAKLNHIVMSFDK</sequence>
<evidence type="ECO:0000250" key="1">
    <source>
        <dbReference type="UniProtKB" id="P0AB87"/>
    </source>
</evidence>
<evidence type="ECO:0000250" key="2">
    <source>
        <dbReference type="UniProtKB" id="Q58813"/>
    </source>
</evidence>
<dbReference type="EC" id="4.1.2.17" evidence="2"/>
<dbReference type="EMBL" id="CP000742">
    <property type="protein sequence ID" value="ABR54410.1"/>
    <property type="molecule type" value="Genomic_DNA"/>
</dbReference>
<dbReference type="RefSeq" id="WP_011972313.1">
    <property type="nucleotide sequence ID" value="NC_009634.1"/>
</dbReference>
<dbReference type="SMR" id="A6UPI8"/>
<dbReference type="STRING" id="406327.Mevan_0503"/>
<dbReference type="GeneID" id="5325627"/>
<dbReference type="KEGG" id="mvn:Mevan_0503"/>
<dbReference type="eggNOG" id="arCOG04226">
    <property type="taxonomic scope" value="Archaea"/>
</dbReference>
<dbReference type="HOGENOM" id="CLU_006033_3_4_2"/>
<dbReference type="OrthoDB" id="18709at2157"/>
<dbReference type="UniPathway" id="UPA00071"/>
<dbReference type="Proteomes" id="UP000001107">
    <property type="component" value="Chromosome"/>
</dbReference>
<dbReference type="GO" id="GO:0005829">
    <property type="term" value="C:cytosol"/>
    <property type="evidence" value="ECO:0007669"/>
    <property type="project" value="TreeGrafter"/>
</dbReference>
<dbReference type="GO" id="GO:0008738">
    <property type="term" value="F:L-fuculose-phosphate aldolase activity"/>
    <property type="evidence" value="ECO:0000250"/>
    <property type="project" value="UniProtKB"/>
</dbReference>
<dbReference type="GO" id="GO:0008270">
    <property type="term" value="F:zinc ion binding"/>
    <property type="evidence" value="ECO:0000250"/>
    <property type="project" value="UniProtKB"/>
</dbReference>
<dbReference type="GO" id="GO:0019323">
    <property type="term" value="P:pentose catabolic process"/>
    <property type="evidence" value="ECO:0007669"/>
    <property type="project" value="TreeGrafter"/>
</dbReference>
<dbReference type="FunFam" id="3.40.225.10:FF:000008">
    <property type="entry name" value="Sugar aldolase"/>
    <property type="match status" value="1"/>
</dbReference>
<dbReference type="Gene3D" id="3.40.225.10">
    <property type="entry name" value="Class II aldolase/adducin N-terminal domain"/>
    <property type="match status" value="1"/>
</dbReference>
<dbReference type="InterPro" id="IPR050197">
    <property type="entry name" value="Aldolase_class_II_sugar_metab"/>
</dbReference>
<dbReference type="InterPro" id="IPR001303">
    <property type="entry name" value="Aldolase_II/adducin_N"/>
</dbReference>
<dbReference type="InterPro" id="IPR036409">
    <property type="entry name" value="Aldolase_II/adducin_N_sf"/>
</dbReference>
<dbReference type="InterPro" id="IPR053406">
    <property type="entry name" value="Fuculose-P_aldolase"/>
</dbReference>
<dbReference type="NCBIfam" id="NF040649">
    <property type="entry name" value="FucA_Meth"/>
    <property type="match status" value="1"/>
</dbReference>
<dbReference type="PANTHER" id="PTHR22789:SF0">
    <property type="entry name" value="3-OXO-TETRONATE 4-PHOSPHATE DECARBOXYLASE-RELATED"/>
    <property type="match status" value="1"/>
</dbReference>
<dbReference type="PANTHER" id="PTHR22789">
    <property type="entry name" value="FUCULOSE PHOSPHATE ALDOLASE"/>
    <property type="match status" value="1"/>
</dbReference>
<dbReference type="Pfam" id="PF00596">
    <property type="entry name" value="Aldolase_II"/>
    <property type="match status" value="1"/>
</dbReference>
<dbReference type="SMART" id="SM01007">
    <property type="entry name" value="Aldolase_II"/>
    <property type="match status" value="1"/>
</dbReference>
<dbReference type="SUPFAM" id="SSF53639">
    <property type="entry name" value="AraD/HMP-PK domain-like"/>
    <property type="match status" value="1"/>
</dbReference>
<name>FUCA_METVS</name>
<organism>
    <name type="scientific">Methanococcus vannielii (strain ATCC 35089 / DSM 1224 / JCM 13029 / OCM 148 / SB)</name>
    <dbReference type="NCBI Taxonomy" id="406327"/>
    <lineage>
        <taxon>Archaea</taxon>
        <taxon>Methanobacteriati</taxon>
        <taxon>Methanobacteriota</taxon>
        <taxon>Methanomada group</taxon>
        <taxon>Methanococci</taxon>
        <taxon>Methanococcales</taxon>
        <taxon>Methanococcaceae</taxon>
        <taxon>Methanococcus</taxon>
    </lineage>
</organism>
<reference key="1">
    <citation type="submission" date="2007-06" db="EMBL/GenBank/DDBJ databases">
        <title>Complete sequence of Methanococcus vannielii SB.</title>
        <authorList>
            <consortium name="US DOE Joint Genome Institute"/>
            <person name="Copeland A."/>
            <person name="Lucas S."/>
            <person name="Lapidus A."/>
            <person name="Barry K."/>
            <person name="Glavina del Rio T."/>
            <person name="Dalin E."/>
            <person name="Tice H."/>
            <person name="Pitluck S."/>
            <person name="Chain P."/>
            <person name="Malfatti S."/>
            <person name="Shin M."/>
            <person name="Vergez L."/>
            <person name="Schmutz J."/>
            <person name="Larimer F."/>
            <person name="Land M."/>
            <person name="Hauser L."/>
            <person name="Kyrpides N."/>
            <person name="Anderson I."/>
            <person name="Sieprawska-Lupa M."/>
            <person name="Whitman W.B."/>
            <person name="Richardson P."/>
        </authorList>
    </citation>
    <scope>NUCLEOTIDE SEQUENCE [LARGE SCALE GENOMIC DNA]</scope>
    <source>
        <strain>ATCC 35089 / DSM 1224 / JCM 13029 / OCM 148 / SB</strain>
    </source>
</reference>
<keyword id="KW-0456">Lyase</keyword>
<keyword id="KW-0479">Metal-binding</keyword>
<keyword id="KW-0862">Zinc</keyword>
<feature type="chain" id="PRO_0000342598" description="L-fuculose phosphate aldolase">
    <location>
        <begin position="1"/>
        <end position="181"/>
    </location>
</feature>
<feature type="active site" description="Proton donor/acceptor" evidence="1">
    <location>
        <position position="68"/>
    </location>
</feature>
<feature type="binding site" evidence="1">
    <location>
        <begin position="24"/>
        <end position="25"/>
    </location>
    <ligand>
        <name>substrate</name>
    </ligand>
</feature>
<feature type="binding site" evidence="1">
    <location>
        <begin position="39"/>
        <end position="40"/>
    </location>
    <ligand>
        <name>substrate</name>
    </ligand>
</feature>
<feature type="binding site" evidence="1">
    <location>
        <begin position="66"/>
        <end position="67"/>
    </location>
    <ligand>
        <name>substrate</name>
    </ligand>
</feature>
<feature type="binding site" evidence="1">
    <location>
        <position position="68"/>
    </location>
    <ligand>
        <name>Zn(2+)</name>
        <dbReference type="ChEBI" id="CHEBI:29105"/>
        <note>catalytic</note>
    </ligand>
</feature>
<feature type="binding site" evidence="1">
    <location>
        <position position="87"/>
    </location>
    <ligand>
        <name>Zn(2+)</name>
        <dbReference type="ChEBI" id="CHEBI:29105"/>
        <note>catalytic</note>
    </ligand>
</feature>
<feature type="binding site" evidence="1">
    <location>
        <position position="89"/>
    </location>
    <ligand>
        <name>Zn(2+)</name>
        <dbReference type="ChEBI" id="CHEBI:29105"/>
        <note>catalytic</note>
    </ligand>
</feature>
<feature type="binding site" evidence="1">
    <location>
        <position position="147"/>
    </location>
    <ligand>
        <name>Zn(2+)</name>
        <dbReference type="ChEBI" id="CHEBI:29105"/>
        <note>catalytic</note>
    </ligand>
</feature>
<protein>
    <recommendedName>
        <fullName evidence="2">L-fuculose phosphate aldolase</fullName>
        <ecNumber evidence="2">4.1.2.17</ecNumber>
    </recommendedName>
    <alternativeName>
        <fullName evidence="2">L-fuculose-1-phosphate aldolase</fullName>
    </alternativeName>
</protein>